<accession>B8ERB9</accession>
<gene>
    <name evidence="1" type="primary">cobT</name>
    <name type="ordered locus">Msil_1338</name>
</gene>
<name>COBT_METSB</name>
<evidence type="ECO:0000255" key="1">
    <source>
        <dbReference type="HAMAP-Rule" id="MF_00230"/>
    </source>
</evidence>
<protein>
    <recommendedName>
        <fullName evidence="1">Nicotinate-nucleotide--dimethylbenzimidazole phosphoribosyltransferase</fullName>
        <shortName evidence="1">NN:DBI PRT</shortName>
        <ecNumber evidence="1">2.4.2.21</ecNumber>
    </recommendedName>
    <alternativeName>
        <fullName evidence="1">N(1)-alpha-phosphoribosyltransferase</fullName>
    </alternativeName>
</protein>
<comment type="function">
    <text evidence="1">Catalyzes the synthesis of alpha-ribazole-5'-phosphate from nicotinate mononucleotide (NAMN) and 5,6-dimethylbenzimidazole (DMB).</text>
</comment>
<comment type="catalytic activity">
    <reaction evidence="1">
        <text>5,6-dimethylbenzimidazole + nicotinate beta-D-ribonucleotide = alpha-ribazole 5'-phosphate + nicotinate + H(+)</text>
        <dbReference type="Rhea" id="RHEA:11196"/>
        <dbReference type="ChEBI" id="CHEBI:15378"/>
        <dbReference type="ChEBI" id="CHEBI:15890"/>
        <dbReference type="ChEBI" id="CHEBI:32544"/>
        <dbReference type="ChEBI" id="CHEBI:57502"/>
        <dbReference type="ChEBI" id="CHEBI:57918"/>
        <dbReference type="EC" id="2.4.2.21"/>
    </reaction>
</comment>
<comment type="pathway">
    <text evidence="1">Nucleoside biosynthesis; alpha-ribazole biosynthesis; alpha-ribazole from 5,6-dimethylbenzimidazole: step 1/2.</text>
</comment>
<comment type="similarity">
    <text evidence="1">Belongs to the CobT family.</text>
</comment>
<organism>
    <name type="scientific">Methylocella silvestris (strain DSM 15510 / CIP 108128 / LMG 27833 / NCIMB 13906 / BL2)</name>
    <dbReference type="NCBI Taxonomy" id="395965"/>
    <lineage>
        <taxon>Bacteria</taxon>
        <taxon>Pseudomonadati</taxon>
        <taxon>Pseudomonadota</taxon>
        <taxon>Alphaproteobacteria</taxon>
        <taxon>Hyphomicrobiales</taxon>
        <taxon>Beijerinckiaceae</taxon>
        <taxon>Methylocella</taxon>
    </lineage>
</organism>
<dbReference type="EC" id="2.4.2.21" evidence="1"/>
<dbReference type="EMBL" id="CP001280">
    <property type="protein sequence ID" value="ACK50303.1"/>
    <property type="molecule type" value="Genomic_DNA"/>
</dbReference>
<dbReference type="RefSeq" id="WP_012590373.1">
    <property type="nucleotide sequence ID" value="NC_011666.1"/>
</dbReference>
<dbReference type="SMR" id="B8ERB9"/>
<dbReference type="STRING" id="395965.Msil_1338"/>
<dbReference type="KEGG" id="msl:Msil_1338"/>
<dbReference type="eggNOG" id="COG2038">
    <property type="taxonomic scope" value="Bacteria"/>
</dbReference>
<dbReference type="HOGENOM" id="CLU_002982_0_1_5"/>
<dbReference type="OrthoDB" id="9781491at2"/>
<dbReference type="UniPathway" id="UPA00061">
    <property type="reaction ID" value="UER00516"/>
</dbReference>
<dbReference type="Proteomes" id="UP000002257">
    <property type="component" value="Chromosome"/>
</dbReference>
<dbReference type="GO" id="GO:0008939">
    <property type="term" value="F:nicotinate-nucleotide-dimethylbenzimidazole phosphoribosyltransferase activity"/>
    <property type="evidence" value="ECO:0007669"/>
    <property type="project" value="UniProtKB-UniRule"/>
</dbReference>
<dbReference type="GO" id="GO:0009236">
    <property type="term" value="P:cobalamin biosynthetic process"/>
    <property type="evidence" value="ECO:0007669"/>
    <property type="project" value="UniProtKB-KW"/>
</dbReference>
<dbReference type="CDD" id="cd02439">
    <property type="entry name" value="DMB-PRT_CobT"/>
    <property type="match status" value="1"/>
</dbReference>
<dbReference type="Gene3D" id="1.10.1610.10">
    <property type="match status" value="1"/>
</dbReference>
<dbReference type="Gene3D" id="3.40.50.10210">
    <property type="match status" value="1"/>
</dbReference>
<dbReference type="HAMAP" id="MF_00230">
    <property type="entry name" value="CobT"/>
    <property type="match status" value="1"/>
</dbReference>
<dbReference type="InterPro" id="IPR003200">
    <property type="entry name" value="Nict_dMeBzImd_PRibTrfase"/>
</dbReference>
<dbReference type="InterPro" id="IPR017846">
    <property type="entry name" value="Nict_dMeBzImd_PRibTrfase_bact"/>
</dbReference>
<dbReference type="InterPro" id="IPR023195">
    <property type="entry name" value="Nict_dMeBzImd_PRibTrfase_N"/>
</dbReference>
<dbReference type="InterPro" id="IPR036087">
    <property type="entry name" value="Nict_dMeBzImd_PRibTrfase_sf"/>
</dbReference>
<dbReference type="NCBIfam" id="TIGR03160">
    <property type="entry name" value="cobT_DBIPRT"/>
    <property type="match status" value="1"/>
</dbReference>
<dbReference type="NCBIfam" id="NF000996">
    <property type="entry name" value="PRK00105.1"/>
    <property type="match status" value="1"/>
</dbReference>
<dbReference type="PANTHER" id="PTHR43463">
    <property type="entry name" value="NICOTINATE-NUCLEOTIDE--DIMETHYLBENZIMIDAZOLE PHOSPHORIBOSYLTRANSFERASE"/>
    <property type="match status" value="1"/>
</dbReference>
<dbReference type="PANTHER" id="PTHR43463:SF1">
    <property type="entry name" value="NICOTINATE-NUCLEOTIDE--DIMETHYLBENZIMIDAZOLE PHOSPHORIBOSYLTRANSFERASE"/>
    <property type="match status" value="1"/>
</dbReference>
<dbReference type="Pfam" id="PF02277">
    <property type="entry name" value="DBI_PRT"/>
    <property type="match status" value="1"/>
</dbReference>
<dbReference type="SUPFAM" id="SSF52733">
    <property type="entry name" value="Nicotinate mononucleotide:5,6-dimethylbenzimidazole phosphoribosyltransferase (CobT)"/>
    <property type="match status" value="1"/>
</dbReference>
<proteinExistence type="inferred from homology"/>
<sequence>MLADAAPLDSIRHLIGKMPPASERAAAAARARQAELTKPQGSLGRLEEIAAFLASWQGKPSPTLDRPLVAVFAANHGVVAKGVSAYPPSVTRAMMQNFSAGGAAINQICGAFGVGLKVFELALDIPTKDITEEPAMEAAETAATFAFGMEAIDGGVDLLCVGEMGIGNTTVAAAIFYALYGGSAADWVGRGAGVEGEALARKMAAVETAVALHRPFLSDPLEVMRRLGGREIAAMAGAIVAARMQNIPVVLDGYVVCAAAAILHAVDKSALDHCLAGHLSAEGAHGEVLRRLGKIPLLDLGMRLGEGSGAALAVGLIKAAVACHTGMATFAEAQVAGKVGG</sequence>
<feature type="chain" id="PRO_1000125108" description="Nicotinate-nucleotide--dimethylbenzimidazole phosphoribosyltransferase">
    <location>
        <begin position="1"/>
        <end position="341"/>
    </location>
</feature>
<feature type="active site" description="Proton acceptor" evidence="1">
    <location>
        <position position="306"/>
    </location>
</feature>
<reference key="1">
    <citation type="journal article" date="2010" name="J. Bacteriol.">
        <title>Complete genome sequence of the aerobic facultative methanotroph Methylocella silvestris BL2.</title>
        <authorList>
            <person name="Chen Y."/>
            <person name="Crombie A."/>
            <person name="Rahman M.T."/>
            <person name="Dedysh S.N."/>
            <person name="Liesack W."/>
            <person name="Stott M.B."/>
            <person name="Alam M."/>
            <person name="Theisen A.R."/>
            <person name="Murrell J.C."/>
            <person name="Dunfield P.F."/>
        </authorList>
    </citation>
    <scope>NUCLEOTIDE SEQUENCE [LARGE SCALE GENOMIC DNA]</scope>
    <source>
        <strain>DSM 15510 / CIP 108128 / LMG 27833 / NCIMB 13906 / BL2</strain>
    </source>
</reference>
<keyword id="KW-0169">Cobalamin biosynthesis</keyword>
<keyword id="KW-0328">Glycosyltransferase</keyword>
<keyword id="KW-1185">Reference proteome</keyword>
<keyword id="KW-0808">Transferase</keyword>